<reference key="1">
    <citation type="journal article" date="1993" name="Theor. Appl. Genet.">
        <title>Mitochondrial DNA of cytoplasmic male-sterile Triticum timopheevi: rearrangement of upstream sequences of the atp6 and orf25 genes.</title>
        <authorList>
            <person name="Mohr S.K."/>
            <person name="Schulte-Kappert E."/>
            <person name="Oettler G."/>
            <person name="Odenbach W."/>
            <person name="Kueck U."/>
        </authorList>
        <dbReference type="AGRICOLA" id="IND93035141"/>
    </citation>
    <scope>NUCLEOTIDE SEQUENCE [GENOMIC DNA]</scope>
    <source>
        <strain>I/2</strain>
    </source>
</reference>
<dbReference type="EMBL" id="X62094">
    <property type="protein sequence ID" value="CAA44004.1"/>
    <property type="molecule type" value="Genomic_DNA"/>
</dbReference>
<dbReference type="RefSeq" id="YP_008758155.1">
    <property type="nucleotide sequence ID" value="NC_022714.1"/>
</dbReference>
<dbReference type="SMR" id="P68537"/>
<dbReference type="EnsemblPlants" id="Tritim_EIv0.3_0896070.1">
    <property type="protein sequence ID" value="Tritim_EIv0.3_0896070.1.CDS1"/>
    <property type="gene ID" value="Tritim_EIv0.3_0896070"/>
</dbReference>
<dbReference type="EnsemblPlants" id="Tritim_EIv0.3_1170420.1">
    <property type="protein sequence ID" value="Tritim_EIv0.3_1170420.1.CDS1"/>
    <property type="gene ID" value="Tritim_EIv0.3_1170420"/>
</dbReference>
<dbReference type="EnsemblPlants" id="Tritim_EIv0.3_1170790.1">
    <property type="protein sequence ID" value="Tritim_EIv0.3_1170790.1.CDS1"/>
    <property type="gene ID" value="Tritim_EIv0.3_1170790"/>
</dbReference>
<dbReference type="EnsemblPlants" id="Tritim_EIv0.3_1312620.1">
    <property type="protein sequence ID" value="Tritim_EIv0.3_1312620.1.CDS1"/>
    <property type="gene ID" value="Tritim_EIv0.3_1312620"/>
</dbReference>
<dbReference type="EnsemblPlants" id="Tritim_EIv0.3_1312910.1">
    <property type="protein sequence ID" value="Tritim_EIv0.3_1312910.1.CDS1"/>
    <property type="gene ID" value="Tritim_EIv0.3_1312910"/>
</dbReference>
<dbReference type="EnsemblPlants" id="Tritim_EIv0.3_1519410.1">
    <property type="protein sequence ID" value="Tritim_EIv0.3_1519410.1.CDS1"/>
    <property type="gene ID" value="Tritim_EIv0.3_1519410"/>
</dbReference>
<dbReference type="EnsemblPlants" id="Tritim_EIv0.3_1601390.1">
    <property type="protein sequence ID" value="Tritim_EIv0.3_1601390.1.CDS1"/>
    <property type="gene ID" value="Tritim_EIv0.3_1601390"/>
</dbReference>
<dbReference type="EnsemblPlants" id="Tritim_EIv0.3_1655800.1">
    <property type="protein sequence ID" value="Tritim_EIv0.3_1655800.1.CDS1"/>
    <property type="gene ID" value="Tritim_EIv0.3_1655800"/>
</dbReference>
<dbReference type="GeneID" id="17428095"/>
<dbReference type="Gramene" id="Tritim_EIv0.3_0896070.1">
    <property type="protein sequence ID" value="Tritim_EIv0.3_0896070.1.CDS1"/>
    <property type="gene ID" value="Tritim_EIv0.3_0896070"/>
</dbReference>
<dbReference type="Gramene" id="Tritim_EIv0.3_1170420.1">
    <property type="protein sequence ID" value="Tritim_EIv0.3_1170420.1.CDS1"/>
    <property type="gene ID" value="Tritim_EIv0.3_1170420"/>
</dbReference>
<dbReference type="Gramene" id="Tritim_EIv0.3_1170790.1">
    <property type="protein sequence ID" value="Tritim_EIv0.3_1170790.1.CDS1"/>
    <property type="gene ID" value="Tritim_EIv0.3_1170790"/>
</dbReference>
<dbReference type="Gramene" id="Tritim_EIv0.3_1312620.1">
    <property type="protein sequence ID" value="Tritim_EIv0.3_1312620.1.CDS1"/>
    <property type="gene ID" value="Tritim_EIv0.3_1312620"/>
</dbReference>
<dbReference type="Gramene" id="Tritim_EIv0.3_1312910.1">
    <property type="protein sequence ID" value="Tritim_EIv0.3_1312910.1.CDS1"/>
    <property type="gene ID" value="Tritim_EIv0.3_1312910"/>
</dbReference>
<dbReference type="Gramene" id="Tritim_EIv0.3_1519410.1">
    <property type="protein sequence ID" value="Tritim_EIv0.3_1519410.1.CDS1"/>
    <property type="gene ID" value="Tritim_EIv0.3_1519410"/>
</dbReference>
<dbReference type="Gramene" id="Tritim_EIv0.3_1601390.1">
    <property type="protein sequence ID" value="Tritim_EIv0.3_1601390.1.CDS1"/>
    <property type="gene ID" value="Tritim_EIv0.3_1601390"/>
</dbReference>
<dbReference type="Gramene" id="Tritim_EIv0.3_1655800.1">
    <property type="protein sequence ID" value="Tritim_EIv0.3_1655800.1.CDS1"/>
    <property type="gene ID" value="Tritim_EIv0.3_1655800"/>
</dbReference>
<dbReference type="GO" id="GO:0031966">
    <property type="term" value="C:mitochondrial membrane"/>
    <property type="evidence" value="ECO:0007669"/>
    <property type="project" value="UniProtKB-SubCell"/>
</dbReference>
<dbReference type="GO" id="GO:0045259">
    <property type="term" value="C:proton-transporting ATP synthase complex"/>
    <property type="evidence" value="ECO:0007669"/>
    <property type="project" value="UniProtKB-KW"/>
</dbReference>
<dbReference type="GO" id="GO:0015078">
    <property type="term" value="F:proton transmembrane transporter activity"/>
    <property type="evidence" value="ECO:0007669"/>
    <property type="project" value="InterPro"/>
</dbReference>
<dbReference type="GO" id="GO:0015986">
    <property type="term" value="P:proton motive force-driven ATP synthesis"/>
    <property type="evidence" value="ECO:0007669"/>
    <property type="project" value="InterPro"/>
</dbReference>
<dbReference type="InterPro" id="IPR008688">
    <property type="entry name" value="ATP_synth_Bsub_B/MI25"/>
</dbReference>
<dbReference type="InterPro" id="IPR044988">
    <property type="entry name" value="MI25_plants"/>
</dbReference>
<dbReference type="PANTHER" id="PTHR37774:SF4">
    <property type="entry name" value="ATP SYNTHASE PROTEIN MI25"/>
    <property type="match status" value="1"/>
</dbReference>
<dbReference type="PANTHER" id="PTHR37774">
    <property type="entry name" value="ATP SYNTHASE PROTEIN MI25-RELATED"/>
    <property type="match status" value="1"/>
</dbReference>
<dbReference type="Pfam" id="PF05405">
    <property type="entry name" value="Mt_ATP-synt_B"/>
    <property type="match status" value="1"/>
</dbReference>
<accession>P68537</accession>
<accession>P23513</accession>
<feature type="chain" id="PRO_0000096477" description="ATP synthase protein MI25">
    <location>
        <begin position="1"/>
        <end position="192"/>
    </location>
</feature>
<feature type="transmembrane region" description="Helical" evidence="2">
    <location>
        <begin position="29"/>
        <end position="49"/>
    </location>
</feature>
<proteinExistence type="inferred from homology"/>
<geneLocation type="mitochondrion"/>
<sequence length="192" mass="21653">MRFLSTDMKDRNMLFAAIPSICASSPKKISIYNEEMIVARCFIGFLIFSRKSLGKTFKETLDGRIESIQEELLQFFNPNEVIPEESNEQQRLLRISLRICSTVVESLPTARCAPKCEKTVQALLCRNLNVKSATLLNATSSRRIRLQDDIVTGFHFSVSERFVSGSTFKASTIDLIREGLIVLRKVRVGGSI</sequence>
<comment type="function">
    <text evidence="1">This is one of the chains of the nonenzymatic component (CF(0) subunit) of the mitochondrial ATPase complex.</text>
</comment>
<comment type="subunit">
    <text evidence="1">F-type ATPases have 2 components, CF(1) - the catalytic core - and CF(0) - the membrane proton channel. CF(1) has five subunits: alpha(3), beta(3), gamma(1), delta(1), epsilon(1). CF(0) has three main subunits: a, b and c (By similarity).</text>
</comment>
<comment type="subcellular location">
    <subcellularLocation>
        <location evidence="1">Mitochondrion membrane</location>
        <topology evidence="1">Single-pass membrane protein</topology>
    </subcellularLocation>
</comment>
<comment type="similarity">
    <text evidence="3">Belongs to the ATPase protein MI25 family.</text>
</comment>
<protein>
    <recommendedName>
        <fullName>ATP synthase protein MI25</fullName>
    </recommendedName>
    <alternativeName>
        <fullName>ORF25</fullName>
    </alternativeName>
</protein>
<evidence type="ECO:0000250" key="1"/>
<evidence type="ECO:0000255" key="2"/>
<evidence type="ECO:0000305" key="3"/>
<keyword id="KW-0066">ATP synthesis</keyword>
<keyword id="KW-0138">CF(0)</keyword>
<keyword id="KW-0375">Hydrogen ion transport</keyword>
<keyword id="KW-0406">Ion transport</keyword>
<keyword id="KW-0472">Membrane</keyword>
<keyword id="KW-0496">Mitochondrion</keyword>
<keyword id="KW-0812">Transmembrane</keyword>
<keyword id="KW-1133">Transmembrane helix</keyword>
<keyword id="KW-0813">Transport</keyword>
<organism>
    <name type="scientific">Triticum timopheevii</name>
    <name type="common">Timopheev's wheat</name>
    <name type="synonym">Triticum dicoccon var. timopheevii</name>
    <dbReference type="NCBI Taxonomy" id="4570"/>
    <lineage>
        <taxon>Eukaryota</taxon>
        <taxon>Viridiplantae</taxon>
        <taxon>Streptophyta</taxon>
        <taxon>Embryophyta</taxon>
        <taxon>Tracheophyta</taxon>
        <taxon>Spermatophyta</taxon>
        <taxon>Magnoliopsida</taxon>
        <taxon>Liliopsida</taxon>
        <taxon>Poales</taxon>
        <taxon>Poaceae</taxon>
        <taxon>BOP clade</taxon>
        <taxon>Pooideae</taxon>
        <taxon>Triticodae</taxon>
        <taxon>Triticeae</taxon>
        <taxon>Triticinae</taxon>
        <taxon>Triticum</taxon>
    </lineage>
</organism>
<name>MI25_TRITI</name>